<reference key="1">
    <citation type="journal article" date="2006" name="Proc. Natl. Acad. Sci. U.S.A.">
        <title>Evolution of sensory complexity recorded in a myxobacterial genome.</title>
        <authorList>
            <person name="Goldman B.S."/>
            <person name="Nierman W.C."/>
            <person name="Kaiser D."/>
            <person name="Slater S.C."/>
            <person name="Durkin A.S."/>
            <person name="Eisen J.A."/>
            <person name="Ronning C.M."/>
            <person name="Barbazuk W.B."/>
            <person name="Blanchard M."/>
            <person name="Field C."/>
            <person name="Halling C."/>
            <person name="Hinkle G."/>
            <person name="Iartchuk O."/>
            <person name="Kim H.S."/>
            <person name="Mackenzie C."/>
            <person name="Madupu R."/>
            <person name="Miller N."/>
            <person name="Shvartsbeyn A."/>
            <person name="Sullivan S.A."/>
            <person name="Vaudin M."/>
            <person name="Wiegand R."/>
            <person name="Kaplan H.B."/>
        </authorList>
    </citation>
    <scope>NUCLEOTIDE SEQUENCE [LARGE SCALE GENOMIC DNA]</scope>
    <source>
        <strain>DK1622</strain>
    </source>
</reference>
<comment type="similarity">
    <text evidence="1">Belongs to the bacterial ribosomal protein bL27 family.</text>
</comment>
<dbReference type="EMBL" id="CP000113">
    <property type="protein sequence ID" value="ABF87598.1"/>
    <property type="molecule type" value="Genomic_DNA"/>
</dbReference>
<dbReference type="RefSeq" id="WP_011551586.1">
    <property type="nucleotide sequence ID" value="NC_008095.1"/>
</dbReference>
<dbReference type="SMR" id="Q1DC96"/>
<dbReference type="STRING" id="246197.MXAN_1470"/>
<dbReference type="EnsemblBacteria" id="ABF87598">
    <property type="protein sequence ID" value="ABF87598"/>
    <property type="gene ID" value="MXAN_1470"/>
</dbReference>
<dbReference type="GeneID" id="41358916"/>
<dbReference type="KEGG" id="mxa:MXAN_1470"/>
<dbReference type="eggNOG" id="COG0211">
    <property type="taxonomic scope" value="Bacteria"/>
</dbReference>
<dbReference type="HOGENOM" id="CLU_095424_4_0_7"/>
<dbReference type="OrthoDB" id="9803474at2"/>
<dbReference type="Proteomes" id="UP000002402">
    <property type="component" value="Chromosome"/>
</dbReference>
<dbReference type="GO" id="GO:0022625">
    <property type="term" value="C:cytosolic large ribosomal subunit"/>
    <property type="evidence" value="ECO:0007669"/>
    <property type="project" value="TreeGrafter"/>
</dbReference>
<dbReference type="GO" id="GO:0003735">
    <property type="term" value="F:structural constituent of ribosome"/>
    <property type="evidence" value="ECO:0007669"/>
    <property type="project" value="InterPro"/>
</dbReference>
<dbReference type="GO" id="GO:0006412">
    <property type="term" value="P:translation"/>
    <property type="evidence" value="ECO:0007669"/>
    <property type="project" value="UniProtKB-UniRule"/>
</dbReference>
<dbReference type="FunFam" id="2.40.50.100:FF:000060">
    <property type="entry name" value="Apicoplast ribosomal protein L27"/>
    <property type="match status" value="1"/>
</dbReference>
<dbReference type="Gene3D" id="2.40.50.100">
    <property type="match status" value="1"/>
</dbReference>
<dbReference type="HAMAP" id="MF_00539">
    <property type="entry name" value="Ribosomal_bL27"/>
    <property type="match status" value="1"/>
</dbReference>
<dbReference type="InterPro" id="IPR001684">
    <property type="entry name" value="Ribosomal_bL27"/>
</dbReference>
<dbReference type="NCBIfam" id="TIGR00062">
    <property type="entry name" value="L27"/>
    <property type="match status" value="1"/>
</dbReference>
<dbReference type="PANTHER" id="PTHR15893:SF0">
    <property type="entry name" value="LARGE RIBOSOMAL SUBUNIT PROTEIN BL27M"/>
    <property type="match status" value="1"/>
</dbReference>
<dbReference type="PANTHER" id="PTHR15893">
    <property type="entry name" value="RIBOSOMAL PROTEIN L27"/>
    <property type="match status" value="1"/>
</dbReference>
<dbReference type="Pfam" id="PF01016">
    <property type="entry name" value="Ribosomal_L27"/>
    <property type="match status" value="1"/>
</dbReference>
<dbReference type="PRINTS" id="PR00063">
    <property type="entry name" value="RIBOSOMALL27"/>
</dbReference>
<dbReference type="SUPFAM" id="SSF110324">
    <property type="entry name" value="Ribosomal L27 protein-like"/>
    <property type="match status" value="1"/>
</dbReference>
<protein>
    <recommendedName>
        <fullName evidence="1">Large ribosomal subunit protein bL27</fullName>
    </recommendedName>
    <alternativeName>
        <fullName evidence="3">50S ribosomal protein L27</fullName>
    </alternativeName>
</protein>
<sequence>MAHKKGQGSSRNGRDSNPQYRGVKVYGGETVSAGSILVRQVGTVIHAGANVKLGRDFTLYSVVDGVVKYERLGRDRKKVSVYPAAAEQASA</sequence>
<evidence type="ECO:0000255" key="1">
    <source>
        <dbReference type="HAMAP-Rule" id="MF_00539"/>
    </source>
</evidence>
<evidence type="ECO:0000256" key="2">
    <source>
        <dbReference type="SAM" id="MobiDB-lite"/>
    </source>
</evidence>
<evidence type="ECO:0000305" key="3"/>
<name>RL27_MYXXD</name>
<accession>Q1DC96</accession>
<organism>
    <name type="scientific">Myxococcus xanthus (strain DK1622)</name>
    <dbReference type="NCBI Taxonomy" id="246197"/>
    <lineage>
        <taxon>Bacteria</taxon>
        <taxon>Pseudomonadati</taxon>
        <taxon>Myxococcota</taxon>
        <taxon>Myxococcia</taxon>
        <taxon>Myxococcales</taxon>
        <taxon>Cystobacterineae</taxon>
        <taxon>Myxococcaceae</taxon>
        <taxon>Myxococcus</taxon>
    </lineage>
</organism>
<keyword id="KW-1185">Reference proteome</keyword>
<keyword id="KW-0687">Ribonucleoprotein</keyword>
<keyword id="KW-0689">Ribosomal protein</keyword>
<feature type="chain" id="PRO_1000017526" description="Large ribosomal subunit protein bL27">
    <location>
        <begin position="1"/>
        <end position="91"/>
    </location>
</feature>
<feature type="region of interest" description="Disordered" evidence="2">
    <location>
        <begin position="1"/>
        <end position="22"/>
    </location>
</feature>
<feature type="compositionally biased region" description="Polar residues" evidence="2">
    <location>
        <begin position="7"/>
        <end position="19"/>
    </location>
</feature>
<proteinExistence type="inferred from homology"/>
<gene>
    <name evidence="1" type="primary">rpmA</name>
    <name type="ordered locus">MXAN_1470</name>
</gene>